<accession>Q6AYP2</accession>
<protein>
    <recommendedName>
        <fullName>Microfibrillar-associated protein 3-like</fullName>
    </recommendedName>
</protein>
<gene>
    <name type="primary">Mfap3l</name>
</gene>
<keyword id="KW-1003">Cell membrane</keyword>
<keyword id="KW-0963">Cytoplasm</keyword>
<keyword id="KW-1015">Disulfide bond</keyword>
<keyword id="KW-0325">Glycoprotein</keyword>
<keyword id="KW-0393">Immunoglobulin domain</keyword>
<keyword id="KW-0472">Membrane</keyword>
<keyword id="KW-0539">Nucleus</keyword>
<keyword id="KW-0597">Phosphoprotein</keyword>
<keyword id="KW-1185">Reference proteome</keyword>
<keyword id="KW-0732">Signal</keyword>
<keyword id="KW-0812">Transmembrane</keyword>
<keyword id="KW-1133">Transmembrane helix</keyword>
<evidence type="ECO:0000250" key="1">
    <source>
        <dbReference type="UniProtKB" id="O75121"/>
    </source>
</evidence>
<evidence type="ECO:0000255" key="2"/>
<evidence type="ECO:0000255" key="3">
    <source>
        <dbReference type="PROSITE-ProRule" id="PRU00114"/>
    </source>
</evidence>
<evidence type="ECO:0000256" key="4">
    <source>
        <dbReference type="SAM" id="MobiDB-lite"/>
    </source>
</evidence>
<evidence type="ECO:0007744" key="5">
    <source>
    </source>
</evidence>
<comment type="function">
    <text evidence="1">May participate in the nuclear signaling of EGFR and MAPK1/ERK2.</text>
</comment>
<comment type="subcellular location">
    <subcellularLocation>
        <location evidence="1">Cell membrane</location>
        <topology evidence="1">Single-pass type I membrane protein</topology>
    </subcellularLocation>
    <subcellularLocation>
        <location evidence="1">Nucleus</location>
    </subcellularLocation>
    <subcellularLocation>
        <location evidence="1">Cytoplasm</location>
    </subcellularLocation>
    <text evidence="1">Mainly localized in the nucleus.</text>
</comment>
<comment type="caution">
    <text evidence="1">A protein kinase activity has been reported kinase activity however PROSITE, Pfam do not detect a protein kinase domain. Its enzyme activity is therefore unsure.</text>
</comment>
<name>MFA3L_RAT</name>
<organism>
    <name type="scientific">Rattus norvegicus</name>
    <name type="common">Rat</name>
    <dbReference type="NCBI Taxonomy" id="10116"/>
    <lineage>
        <taxon>Eukaryota</taxon>
        <taxon>Metazoa</taxon>
        <taxon>Chordata</taxon>
        <taxon>Craniata</taxon>
        <taxon>Vertebrata</taxon>
        <taxon>Euteleostomi</taxon>
        <taxon>Mammalia</taxon>
        <taxon>Eutheria</taxon>
        <taxon>Euarchontoglires</taxon>
        <taxon>Glires</taxon>
        <taxon>Rodentia</taxon>
        <taxon>Myomorpha</taxon>
        <taxon>Muroidea</taxon>
        <taxon>Muridae</taxon>
        <taxon>Murinae</taxon>
        <taxon>Rattus</taxon>
    </lineage>
</organism>
<feature type="signal peptide" evidence="2">
    <location>
        <begin position="1"/>
        <end position="28"/>
    </location>
</feature>
<feature type="chain" id="PRO_0000014871" description="Microfibrillar-associated protein 3-like">
    <location>
        <begin position="29"/>
        <end position="409"/>
    </location>
</feature>
<feature type="topological domain" description="Extracellular" evidence="2">
    <location>
        <begin position="29"/>
        <end position="148"/>
    </location>
</feature>
<feature type="transmembrane region" description="Helical" evidence="2">
    <location>
        <begin position="149"/>
        <end position="169"/>
    </location>
</feature>
<feature type="topological domain" description="Cytoplasmic" evidence="2">
    <location>
        <begin position="170"/>
        <end position="409"/>
    </location>
</feature>
<feature type="domain" description="Ig-like C2-type">
    <location>
        <begin position="47"/>
        <end position="141"/>
    </location>
</feature>
<feature type="region of interest" description="Disordered" evidence="4">
    <location>
        <begin position="319"/>
        <end position="392"/>
    </location>
</feature>
<feature type="compositionally biased region" description="Acidic residues" evidence="4">
    <location>
        <begin position="333"/>
        <end position="348"/>
    </location>
</feature>
<feature type="compositionally biased region" description="Polar residues" evidence="4">
    <location>
        <begin position="362"/>
        <end position="372"/>
    </location>
</feature>
<feature type="modified residue" description="Phosphotyrosine" evidence="1">
    <location>
        <position position="287"/>
    </location>
</feature>
<feature type="modified residue" description="Phosphoserine" evidence="5">
    <location>
        <position position="298"/>
    </location>
</feature>
<feature type="modified residue" description="Phosphoserine" evidence="5">
    <location>
        <position position="303"/>
    </location>
</feature>
<feature type="modified residue" description="Phosphoserine" evidence="5">
    <location>
        <position position="306"/>
    </location>
</feature>
<feature type="modified residue" description="Phosphoserine" evidence="5">
    <location>
        <position position="307"/>
    </location>
</feature>
<feature type="glycosylation site" description="N-linked (GlcNAc...) asparagine" evidence="2">
    <location>
        <position position="33"/>
    </location>
</feature>
<feature type="glycosylation site" description="N-linked (GlcNAc...) asparagine" evidence="2">
    <location>
        <position position="37"/>
    </location>
</feature>
<feature type="glycosylation site" description="N-linked (GlcNAc...) asparagine" evidence="2">
    <location>
        <position position="67"/>
    </location>
</feature>
<feature type="glycosylation site" description="N-linked (GlcNAc...) asparagine" evidence="2">
    <location>
        <position position="111"/>
    </location>
</feature>
<feature type="glycosylation site" description="N-linked (GlcNAc...) asparagine" evidence="2">
    <location>
        <position position="135"/>
    </location>
</feature>
<feature type="disulfide bond" evidence="3">
    <location>
        <begin position="68"/>
        <end position="125"/>
    </location>
</feature>
<sequence length="409" mass="45377">MGLLKSHLTVCLPPSVPFLILVSTLATAKSVTNSTLNGTDVVLGSVPVIIARTDHIIVKEGNSALINCSAFGIPDLEYKWYNSVGKLLKEMDDEKERGGGKWQMLDGGLLNITKVSFSDRGKYTCVASNIYGTINNTVTLRVIFTSGDMGVYYMVVCLVAFTIVMILNITRLCMMSSHLKKTEKAINEFFRTEGAEKLQKAFEIAKRIPIITSAKTLELAKVTQFKTMEFARYIEELARSVPLPPLIMNCRTIMEEIMEVVGLEEQGQNFVRHTPEGQEAPDRDEVYTIPNSLKRSESPTADSDASSLHEQPQQIAIKVSVHPQSKKDHVDDQEGENLEVKDEEETEPSEEHSPETAEPSTDITTTELTSEEASPVEAPERELPPAHLETTEPAVTCDRNTCIIYESHV</sequence>
<reference key="1">
    <citation type="journal article" date="2004" name="Genome Res.">
        <title>The status, quality, and expansion of the NIH full-length cDNA project: the Mammalian Gene Collection (MGC).</title>
        <authorList>
            <consortium name="The MGC Project Team"/>
        </authorList>
    </citation>
    <scope>NUCLEOTIDE SEQUENCE [LARGE SCALE MRNA]</scope>
    <source>
        <tissue>Testis</tissue>
    </source>
</reference>
<reference key="2">
    <citation type="journal article" date="2012" name="Nat. Commun.">
        <title>Quantitative maps of protein phosphorylation sites across 14 different rat organs and tissues.</title>
        <authorList>
            <person name="Lundby A."/>
            <person name="Secher A."/>
            <person name="Lage K."/>
            <person name="Nordsborg N.B."/>
            <person name="Dmytriyev A."/>
            <person name="Lundby C."/>
            <person name="Olsen J.V."/>
        </authorList>
    </citation>
    <scope>PHOSPHORYLATION [LARGE SCALE ANALYSIS] AT SER-298; SER-303; SER-306 AND SER-307</scope>
    <scope>IDENTIFICATION BY MASS SPECTROMETRY [LARGE SCALE ANALYSIS]</scope>
</reference>
<dbReference type="EMBL" id="BC078969">
    <property type="protein sequence ID" value="AAH78969.1"/>
    <property type="molecule type" value="mRNA"/>
</dbReference>
<dbReference type="RefSeq" id="NP_001012049.1">
    <property type="nucleotide sequence ID" value="NM_001012049.1"/>
</dbReference>
<dbReference type="RefSeq" id="XP_017455596.1">
    <property type="nucleotide sequence ID" value="XM_017600107.3"/>
</dbReference>
<dbReference type="SMR" id="Q6AYP2"/>
<dbReference type="FunCoup" id="Q6AYP2">
    <property type="interactions" value="1067"/>
</dbReference>
<dbReference type="STRING" id="10116.ENSRNOP00000015759"/>
<dbReference type="GlyCosmos" id="Q6AYP2">
    <property type="glycosylation" value="5 sites, No reported glycans"/>
</dbReference>
<dbReference type="GlyGen" id="Q6AYP2">
    <property type="glycosylation" value="5 sites"/>
</dbReference>
<dbReference type="iPTMnet" id="Q6AYP2"/>
<dbReference type="PhosphoSitePlus" id="Q6AYP2"/>
<dbReference type="PaxDb" id="10116-ENSRNOP00000015759"/>
<dbReference type="Ensembl" id="ENSRNOT00000015759.5">
    <property type="protein sequence ID" value="ENSRNOP00000015759.3"/>
    <property type="gene ID" value="ENSRNOG00000011775.5"/>
</dbReference>
<dbReference type="GeneID" id="306424"/>
<dbReference type="KEGG" id="rno:306424"/>
<dbReference type="UCSC" id="RGD:1311274">
    <property type="organism name" value="rat"/>
</dbReference>
<dbReference type="AGR" id="RGD:1311274"/>
<dbReference type="CTD" id="9848"/>
<dbReference type="RGD" id="1311274">
    <property type="gene designation" value="Mfap3l"/>
</dbReference>
<dbReference type="eggNOG" id="ENOG502QW9J">
    <property type="taxonomic scope" value="Eukaryota"/>
</dbReference>
<dbReference type="GeneTree" id="ENSGT00390000011576"/>
<dbReference type="HOGENOM" id="CLU_056017_2_0_1"/>
<dbReference type="InParanoid" id="Q6AYP2"/>
<dbReference type="OMA" id="CVLIDCN"/>
<dbReference type="OrthoDB" id="8611351at2759"/>
<dbReference type="PhylomeDB" id="Q6AYP2"/>
<dbReference type="TreeFam" id="TF333205"/>
<dbReference type="PRO" id="PR:Q6AYP2"/>
<dbReference type="Proteomes" id="UP000002494">
    <property type="component" value="Chromosome 16"/>
</dbReference>
<dbReference type="Bgee" id="ENSRNOG00000011775">
    <property type="expression patterns" value="Expressed in testis and 16 other cell types or tissues"/>
</dbReference>
<dbReference type="GO" id="GO:0030054">
    <property type="term" value="C:cell junction"/>
    <property type="evidence" value="ECO:0007669"/>
    <property type="project" value="Ensembl"/>
</dbReference>
<dbReference type="GO" id="GO:0005737">
    <property type="term" value="C:cytoplasm"/>
    <property type="evidence" value="ECO:0000250"/>
    <property type="project" value="UniProtKB"/>
</dbReference>
<dbReference type="GO" id="GO:0005654">
    <property type="term" value="C:nucleoplasm"/>
    <property type="evidence" value="ECO:0007669"/>
    <property type="project" value="Ensembl"/>
</dbReference>
<dbReference type="GO" id="GO:0005634">
    <property type="term" value="C:nucleus"/>
    <property type="evidence" value="ECO:0000250"/>
    <property type="project" value="UniProtKB"/>
</dbReference>
<dbReference type="GO" id="GO:0005886">
    <property type="term" value="C:plasma membrane"/>
    <property type="evidence" value="ECO:0000250"/>
    <property type="project" value="UniProtKB"/>
</dbReference>
<dbReference type="CDD" id="cd00096">
    <property type="entry name" value="Ig"/>
    <property type="match status" value="1"/>
</dbReference>
<dbReference type="FunFam" id="2.60.40.10:FF:001040">
    <property type="entry name" value="Microfibrillar-associated protein 3-like protein"/>
    <property type="match status" value="1"/>
</dbReference>
<dbReference type="Gene3D" id="2.60.40.10">
    <property type="entry name" value="Immunoglobulins"/>
    <property type="match status" value="1"/>
</dbReference>
<dbReference type="InterPro" id="IPR007110">
    <property type="entry name" value="Ig-like_dom"/>
</dbReference>
<dbReference type="InterPro" id="IPR036179">
    <property type="entry name" value="Ig-like_dom_sf"/>
</dbReference>
<dbReference type="InterPro" id="IPR013783">
    <property type="entry name" value="Ig-like_fold"/>
</dbReference>
<dbReference type="InterPro" id="IPR003599">
    <property type="entry name" value="Ig_sub"/>
</dbReference>
<dbReference type="InterPro" id="IPR003598">
    <property type="entry name" value="Ig_sub2"/>
</dbReference>
<dbReference type="PANTHER" id="PTHR14340">
    <property type="entry name" value="MICROFIBRIL-ASSOCIATED GLYCOPROTEIN 3"/>
    <property type="match status" value="1"/>
</dbReference>
<dbReference type="PANTHER" id="PTHR14340:SF2">
    <property type="entry name" value="MICROFIBRILLAR-ASSOCIATED PROTEIN 3-LIKE"/>
    <property type="match status" value="1"/>
</dbReference>
<dbReference type="Pfam" id="PF13927">
    <property type="entry name" value="Ig_3"/>
    <property type="match status" value="1"/>
</dbReference>
<dbReference type="SMART" id="SM00409">
    <property type="entry name" value="IG"/>
    <property type="match status" value="1"/>
</dbReference>
<dbReference type="SMART" id="SM00408">
    <property type="entry name" value="IGc2"/>
    <property type="match status" value="1"/>
</dbReference>
<dbReference type="SUPFAM" id="SSF48726">
    <property type="entry name" value="Immunoglobulin"/>
    <property type="match status" value="1"/>
</dbReference>
<dbReference type="PROSITE" id="PS50835">
    <property type="entry name" value="IG_LIKE"/>
    <property type="match status" value="1"/>
</dbReference>
<proteinExistence type="evidence at protein level"/>